<name>FAT1_CAEEL</name>
<accession>Q9NEQ0</accession>
<accession>Q21056</accession>
<keyword id="KW-0275">Fatty acid biosynthesis</keyword>
<keyword id="KW-0276">Fatty acid metabolism</keyword>
<keyword id="KW-0444">Lipid biosynthesis</keyword>
<keyword id="KW-0443">Lipid metabolism</keyword>
<keyword id="KW-0472">Membrane</keyword>
<keyword id="KW-0560">Oxidoreductase</keyword>
<keyword id="KW-1185">Reference proteome</keyword>
<keyword id="KW-0812">Transmembrane</keyword>
<keyword id="KW-1133">Transmembrane helix</keyword>
<feature type="chain" id="PRO_0000423383" description="Omega-3 fatty acid desaturase fat-1">
    <location>
        <begin position="1"/>
        <end position="402"/>
    </location>
</feature>
<feature type="transmembrane region" description="Helical" evidence="2">
    <location>
        <begin position="79"/>
        <end position="99"/>
    </location>
</feature>
<feature type="transmembrane region" description="Helical" evidence="2">
    <location>
        <begin position="101"/>
        <end position="121"/>
    </location>
</feature>
<feature type="transmembrane region" description="Helical" evidence="2">
    <location>
        <begin position="235"/>
        <end position="255"/>
    </location>
</feature>
<feature type="transmembrane region" description="Helical" evidence="2">
    <location>
        <begin position="260"/>
        <end position="280"/>
    </location>
</feature>
<feature type="sequence conflict" description="In Ref. 1; AAA67369." evidence="11" ref="1">
    <original>E</original>
    <variation>D</variation>
    <location>
        <position position="231"/>
    </location>
</feature>
<gene>
    <name type="primary">fat-1</name>
    <name type="ORF">Y67H2A.8</name>
</gene>
<dbReference type="EC" id="1.14.19.-" evidence="4 6 8"/>
<dbReference type="EMBL" id="L41807">
    <property type="protein sequence ID" value="AAA67369.1"/>
    <property type="molecule type" value="mRNA"/>
</dbReference>
<dbReference type="EMBL" id="AL132951">
    <property type="protein sequence ID" value="CAC44309.1"/>
    <property type="molecule type" value="Genomic_DNA"/>
</dbReference>
<dbReference type="RefSeq" id="NP_001023560.1">
    <property type="nucleotide sequence ID" value="NM_001028389.5"/>
</dbReference>
<dbReference type="BioGRID" id="43380">
    <property type="interactions" value="3"/>
</dbReference>
<dbReference type="FunCoup" id="Q9NEQ0">
    <property type="interactions" value="4"/>
</dbReference>
<dbReference type="IntAct" id="Q9NEQ0">
    <property type="interactions" value="1"/>
</dbReference>
<dbReference type="STRING" id="6239.Y67H2A.8.1"/>
<dbReference type="SwissLipids" id="SLP:000000265"/>
<dbReference type="PaxDb" id="6239-Y67H2A.8"/>
<dbReference type="PeptideAtlas" id="Q9NEQ0"/>
<dbReference type="EnsemblMetazoa" id="Y67H2A.8.1">
    <property type="protein sequence ID" value="Y67H2A.8.1"/>
    <property type="gene ID" value="WBGene00001393"/>
</dbReference>
<dbReference type="GeneID" id="178291"/>
<dbReference type="KEGG" id="cel:CELE_Y67H2A.8"/>
<dbReference type="AGR" id="WB:WBGene00001393"/>
<dbReference type="CTD" id="178291"/>
<dbReference type="WormBase" id="Y67H2A.8">
    <property type="protein sequence ID" value="CE22790"/>
    <property type="gene ID" value="WBGene00001393"/>
    <property type="gene designation" value="fat-1"/>
</dbReference>
<dbReference type="eggNOG" id="ENOG502QQNB">
    <property type="taxonomic scope" value="Eukaryota"/>
</dbReference>
<dbReference type="GeneTree" id="ENSGT00970000196583"/>
<dbReference type="HOGENOM" id="CLU_033094_1_0_1"/>
<dbReference type="InParanoid" id="Q9NEQ0"/>
<dbReference type="OMA" id="DTVFVPW"/>
<dbReference type="OrthoDB" id="1461976at2759"/>
<dbReference type="PhylomeDB" id="Q9NEQ0"/>
<dbReference type="SignaLink" id="Q9NEQ0"/>
<dbReference type="UniPathway" id="UPA00658"/>
<dbReference type="PRO" id="PR:Q9NEQ0"/>
<dbReference type="Proteomes" id="UP000001940">
    <property type="component" value="Chromosome IV"/>
</dbReference>
<dbReference type="Bgee" id="WBGene00001393">
    <property type="expression patterns" value="Expressed in adult organism and 4 other cell types or tissues"/>
</dbReference>
<dbReference type="GO" id="GO:0016020">
    <property type="term" value="C:membrane"/>
    <property type="evidence" value="ECO:0007669"/>
    <property type="project" value="UniProtKB-SubCell"/>
</dbReference>
<dbReference type="GO" id="GO:0016491">
    <property type="term" value="F:oxidoreductase activity"/>
    <property type="evidence" value="ECO:0000318"/>
    <property type="project" value="GO_Central"/>
</dbReference>
<dbReference type="GO" id="GO:0040017">
    <property type="term" value="P:positive regulation of locomotion"/>
    <property type="evidence" value="ECO:0000315"/>
    <property type="project" value="UniProtKB"/>
</dbReference>
<dbReference type="GO" id="GO:0006636">
    <property type="term" value="P:unsaturated fatty acid biosynthetic process"/>
    <property type="evidence" value="ECO:0000315"/>
    <property type="project" value="WormBase"/>
</dbReference>
<dbReference type="CDD" id="cd03507">
    <property type="entry name" value="Delta12-FADS-like"/>
    <property type="match status" value="1"/>
</dbReference>
<dbReference type="InterPro" id="IPR005804">
    <property type="entry name" value="FA_desaturase_dom"/>
</dbReference>
<dbReference type="InterPro" id="IPR012171">
    <property type="entry name" value="Fatty_acid_desaturase"/>
</dbReference>
<dbReference type="PANTHER" id="PTHR32100">
    <property type="entry name" value="OMEGA-6 FATTY ACID DESATURASE, CHLOROPLASTIC"/>
    <property type="match status" value="1"/>
</dbReference>
<dbReference type="Pfam" id="PF00487">
    <property type="entry name" value="FA_desaturase"/>
    <property type="match status" value="1"/>
</dbReference>
<organism>
    <name type="scientific">Caenorhabditis elegans</name>
    <dbReference type="NCBI Taxonomy" id="6239"/>
    <lineage>
        <taxon>Eukaryota</taxon>
        <taxon>Metazoa</taxon>
        <taxon>Ecdysozoa</taxon>
        <taxon>Nematoda</taxon>
        <taxon>Chromadorea</taxon>
        <taxon>Rhabditida</taxon>
        <taxon>Rhabditina</taxon>
        <taxon>Rhabditomorpha</taxon>
        <taxon>Rhabditoidea</taxon>
        <taxon>Rhabditidae</taxon>
        <taxon>Peloderinae</taxon>
        <taxon>Caenorhabditis</taxon>
    </lineage>
</organism>
<comment type="function">
    <text evidence="1 3 4 5 6 7 8">Omega-3 fatty acid desaturase that recognizes a range of 18- and 20-carbon omega-6 substrates. Introduces a double bond in the fatty acid chain three carbons away from terminal methyl group to biosynthesize n-3 (omega-3) polyunsaturated fatty acids (PUFAs) endogenously (PUFAs are essential for membrane structure and many cellular and physiological processes). Acts on a number of substrates like linoleoyl-CoA ((9Z,12Z)-octadecadienoyl-CoA, 18:2n-6), dihomo-gamma-linolenoyl-CoA ((8Z,11Z,14Z)-eicosatrienoyl-CoA, 20:3n-6), and arachidonoyl-CoA ((5Z,8Z,11Z,14Z)-eicosatetraenoyl-CoA, 20:4n-6), to generate alpha-linolenoyl-CoA ((9Z,12Z,15Z)-octadecatrienoyl-CoA, 18:3n-3), (8Z,11Z,14Z,17Z)-eicosatetraenoyl-CoA (20:4n-3) and (5Z,8Z,11Z,14Z,17Z)-eicosapentaenoyl-CoA (20:5n-3) respectively (PubMed:11972048, PubMed:14765186, PubMed:22041902, PubMed:24391980, PubMed:26806391, PubMed:9037020). Unlike plants, Caenorhabditis elegans desaturases seem to use fatty acyl-CoAs as substrates (By similarity).</text>
</comment>
<comment type="catalytic activity">
    <reaction evidence="4 5 6 8">
        <text>(9Z,12Z)-octadecadienoyl-CoA + 2 Fe(II)-[cytochrome b5] + O2 + 2 H(+) = (9Z,12Z,15Z)-octadecatrienoyl-CoA + 2 Fe(III)-[cytochrome b5] + 2 H2O</text>
        <dbReference type="Rhea" id="RHEA:66040"/>
        <dbReference type="Rhea" id="RHEA-COMP:10438"/>
        <dbReference type="Rhea" id="RHEA-COMP:10439"/>
        <dbReference type="ChEBI" id="CHEBI:15377"/>
        <dbReference type="ChEBI" id="CHEBI:15378"/>
        <dbReference type="ChEBI" id="CHEBI:15379"/>
        <dbReference type="ChEBI" id="CHEBI:29033"/>
        <dbReference type="ChEBI" id="CHEBI:29034"/>
        <dbReference type="ChEBI" id="CHEBI:57383"/>
        <dbReference type="ChEBI" id="CHEBI:74034"/>
    </reaction>
    <physiologicalReaction direction="left-to-right" evidence="6 8 12 13">
        <dbReference type="Rhea" id="RHEA:66041"/>
    </physiologicalReaction>
</comment>
<comment type="catalytic activity">
    <reaction evidence="3 8">
        <text>(8Z,11Z,14Z)-eicosatrienoyl-CoA + 2 Fe(II)-[cytochrome b5] + O2 + 2 H(+) = (8Z,11Z,14Z,17Z)-eicosatetraenoyl-CoA + 2 Fe(III)-[cytochrome b5] + 2 H2O</text>
        <dbReference type="Rhea" id="RHEA:36883"/>
        <dbReference type="Rhea" id="RHEA-COMP:10438"/>
        <dbReference type="Rhea" id="RHEA-COMP:10439"/>
        <dbReference type="ChEBI" id="CHEBI:15377"/>
        <dbReference type="ChEBI" id="CHEBI:15378"/>
        <dbReference type="ChEBI" id="CHEBI:15379"/>
        <dbReference type="ChEBI" id="CHEBI:29033"/>
        <dbReference type="ChEBI" id="CHEBI:29034"/>
        <dbReference type="ChEBI" id="CHEBI:74264"/>
        <dbReference type="ChEBI" id="CHEBI:74265"/>
    </reaction>
    <physiologicalReaction direction="left-to-right" evidence="3 16">
        <dbReference type="Rhea" id="RHEA:36884"/>
    </physiologicalReaction>
</comment>
<comment type="catalytic activity">
    <reaction evidence="3 5 6 8">
        <text>(5Z,8Z,11Z,14Z)-eicosatetraenoyl-CoA + 2 Fe(II)-[cytochrome b5] + O2 + 2 H(+) = (5Z,8Z,11Z,14Z,17Z)-eicosapentaenoyl-CoA + 2 Fe(III)-[cytochrome b5] + 2 H2O</text>
        <dbReference type="Rhea" id="RHEA:36867"/>
        <dbReference type="Rhea" id="RHEA-COMP:10438"/>
        <dbReference type="Rhea" id="RHEA-COMP:10439"/>
        <dbReference type="ChEBI" id="CHEBI:15377"/>
        <dbReference type="ChEBI" id="CHEBI:15378"/>
        <dbReference type="ChEBI" id="CHEBI:15379"/>
        <dbReference type="ChEBI" id="CHEBI:29033"/>
        <dbReference type="ChEBI" id="CHEBI:29034"/>
        <dbReference type="ChEBI" id="CHEBI:57368"/>
        <dbReference type="ChEBI" id="CHEBI:73862"/>
    </reaction>
    <physiologicalReaction direction="left-to-right" evidence="3 13 14 16">
        <dbReference type="Rhea" id="RHEA:36868"/>
    </physiologicalReaction>
</comment>
<comment type="catalytic activity">
    <reaction evidence="6">
        <text>(7Z,10Z,13Z,16Z)-docosatetraenoyl-CoA + 2 Fe(II)-[cytochrome b5] + O2 + 2 H(+) = (7Z,10Z,13Z,16Z,19Z)-docosapentaenoyl-CoA + 2 Fe(III)-[cytochrome b5] + 2 H2O</text>
        <dbReference type="Rhea" id="RHEA:40423"/>
        <dbReference type="Rhea" id="RHEA-COMP:10438"/>
        <dbReference type="Rhea" id="RHEA-COMP:10439"/>
        <dbReference type="ChEBI" id="CHEBI:15377"/>
        <dbReference type="ChEBI" id="CHEBI:15378"/>
        <dbReference type="ChEBI" id="CHEBI:15379"/>
        <dbReference type="ChEBI" id="CHEBI:29033"/>
        <dbReference type="ChEBI" id="CHEBI:29034"/>
        <dbReference type="ChEBI" id="CHEBI:73856"/>
        <dbReference type="ChEBI" id="CHEBI:73870"/>
    </reaction>
    <physiologicalReaction direction="left-to-right" evidence="14">
        <dbReference type="Rhea" id="RHEA:40424"/>
    </physiologicalReaction>
</comment>
<comment type="catalytic activity">
    <reaction evidence="5">
        <text>(6Z,9Z,12Z)-octadecatrienoyl-CoA + 2 Fe(II)-[cytochrome b5] + O2 + 2 H(+) = (6Z,9Z,12Z,15Z)-octadecatetraenoyl-CoA + 2 Fe(III)-[cytochrome b5] + 2 H2O</text>
        <dbReference type="Rhea" id="RHEA:42180"/>
        <dbReference type="Rhea" id="RHEA-COMP:10438"/>
        <dbReference type="Rhea" id="RHEA-COMP:10439"/>
        <dbReference type="ChEBI" id="CHEBI:15377"/>
        <dbReference type="ChEBI" id="CHEBI:15378"/>
        <dbReference type="ChEBI" id="CHEBI:15379"/>
        <dbReference type="ChEBI" id="CHEBI:29033"/>
        <dbReference type="ChEBI" id="CHEBI:29034"/>
        <dbReference type="ChEBI" id="CHEBI:57363"/>
        <dbReference type="ChEBI" id="CHEBI:71489"/>
    </reaction>
    <physiologicalReaction direction="left-to-right" evidence="13">
        <dbReference type="Rhea" id="RHEA:42181"/>
    </physiologicalReaction>
</comment>
<comment type="pathway">
    <text evidence="3 6 12 15">Lipid metabolism; polyunsaturated fatty acid biosynthesis.</text>
</comment>
<comment type="subcellular location">
    <subcellularLocation>
        <location evidence="11">Membrane</location>
        <topology evidence="11">Multi-pass membrane protein</topology>
    </subcellularLocation>
</comment>
<comment type="disruption phenotype">
    <text evidence="3">The fat-1 mutant displays a reduction in the n-3 PUFAs, the homozygous strain is incapable of producing the normal levels of C18 or C20 PUFAs.</text>
</comment>
<comment type="miscellaneous">
    <text evidence="7">HPO-19 and T05H4.4 are cytochrome b5 reductases required for PUFA desaturation in Caenorhabditis elegans. HPO-19 knockdown or mutation alters FAT-1 desaturase activity. Although FAT-1 lacks a cytochrome b5 domain, its N-terminal contains a DUF3474 domain that may possess some oxidoreductase activity for electron transfer, obviating the need for an extra cytochrome b5 enzyme, but still requiring cytochrome b5 reductase HPO-19/T05H4.4 to become activated.</text>
</comment>
<comment type="similarity">
    <text evidence="11">Belongs to the fatty acid desaturase type 1 family.</text>
</comment>
<proteinExistence type="evidence at protein level"/>
<sequence>MVAHSSEGLSATAPVTGGDVLVDARASLEEKEAPRDVNANTKQATTEEPRIQLPTVDAFRRAIPAHCFERDLVKSIRYLVQDFAALTILYFALPAFEYFGLFGYLVWNIFMGVFGFALFVVGHDCLHGSFSDNQNLNDFIGHIAFSPLFSPYFPWQKSHKLHHAFTNHIDKDHGHVWIQDKDWEAMPSWKRWFNPIPFSGWLKWFPVYTLFGFCDGSHFWPYSSLFVRNSERVQCVISGICCCVCAYIALTIAGSYSNWFWYYWVPLSFFGLMLVIVTYLQHVDDVAEVYEADEWSFVRGQTQTIDRYYGLGLDTTMHHITDGHVAHHFFNKIPHYHLIEATEGVKKVLEPLSDTQYGYKSQVNYDFFARFLWFNYKLDYLVHKTAGIMQFRTTLEEKAKAK</sequence>
<reference key="1">
    <citation type="journal article" date="1997" name="Proc. Natl. Acad. Sci. U.S.A.">
        <title>Identification of an animal omega-3 fatty acid desaturase by heterologous expression in Arabidopsis.</title>
        <authorList>
            <person name="Spychalla J.P."/>
            <person name="Kinney A.J."/>
            <person name="Browse J."/>
        </authorList>
    </citation>
    <scope>NUCLEOTIDE SEQUENCE [MRNA]</scope>
    <scope>FUNCTION</scope>
    <scope>CATALYTIC ACTIVITY</scope>
</reference>
<reference key="2">
    <citation type="journal article" date="1998" name="Science">
        <title>Genome sequence of the nematode C. elegans: a platform for investigating biology.</title>
        <authorList>
            <consortium name="The C. elegans sequencing consortium"/>
        </authorList>
    </citation>
    <scope>NUCLEOTIDE SEQUENCE [LARGE SCALE GENOMIC DNA]</scope>
    <source>
        <strain>Bristol N2</strain>
    </source>
</reference>
<reference key="3">
    <citation type="journal article" date="2002" name="Proc. Natl. Acad. Sci. U.S.A.">
        <title>Genetic dissection of polyunsaturated fatty acid synthesis in Caenorhabditis elegans.</title>
        <authorList>
            <person name="Watts J.L."/>
            <person name="Browse J."/>
        </authorList>
    </citation>
    <scope>FUNCTION</scope>
    <scope>CATALYTIC ACTIVITY</scope>
    <scope>PATHWAY</scope>
    <scope>DISRUPTION PHENOTYPE</scope>
</reference>
<reference key="4">
    <citation type="journal article" date="2004" name="Nature">
        <title>Transgenic mice: fat-1 mice convert n-6 to n-3 fatty acids.</title>
        <authorList>
            <person name="Kang J.X."/>
            <person name="Wang J."/>
            <person name="Wu L."/>
            <person name="Kang Z.B."/>
        </authorList>
    </citation>
    <scope>FUNCTION</scope>
    <scope>CATALYTIC ACTIVITY</scope>
    <scope>PATHWAY</scope>
</reference>
<reference key="5">
    <citation type="journal article" date="2011" name="J. Biol. Chem.">
        <title>Caenorhabditis elegans Delta12-desaturase FAT-2 is a bifunctional desaturase able to desaturate a diverse range of fatty acid substrates at the Delta12 and Delta15 positions.</title>
        <authorList>
            <person name="Zhou X.-R."/>
            <person name="Green A.G."/>
            <person name="Singh S.P."/>
        </authorList>
    </citation>
    <scope>FUNCTION</scope>
    <scope>CATALYTIC ACTIVITY</scope>
</reference>
<reference key="6">
    <citation type="journal article" date="2013" name="PLoS ONE">
        <title>A more desirable balanced polyunsaturated fatty acid composition achieved by heterologous expression of Delta15/Delta4 desaturases in mammalian cells.</title>
        <authorList>
            <person name="Zhu G."/>
            <person name="Ou Q."/>
            <person name="Zhang T."/>
            <person name="Jiang X."/>
            <person name="Sun G."/>
            <person name="Zhang N."/>
            <person name="Wang K."/>
            <person name="Fang H."/>
            <person name="Wang M."/>
            <person name="Sun J."/>
            <person name="Ge T."/>
        </authorList>
    </citation>
    <scope>FUNCTION</scope>
    <scope>CATALYTIC ACTIVITY</scope>
    <scope>PATHWAY</scope>
</reference>
<reference key="7">
    <citation type="journal article" date="2016" name="Biochim. Biophys. Acta">
        <title>The cytochrome b5 reductase HPO-19 is required for biosynthesis of polyunsaturated fatty acids in Caenorhabditis elegans.</title>
        <authorList>
            <person name="Zhang Y."/>
            <person name="Wang H."/>
            <person name="Zhang J."/>
            <person name="Hu Y."/>
            <person name="Zhang L."/>
            <person name="Wu X."/>
            <person name="Su X."/>
            <person name="Li T."/>
            <person name="Zou X."/>
            <person name="Liang B."/>
        </authorList>
    </citation>
    <scope>FUNCTION</scope>
    <scope>PATHWAY</scope>
</reference>
<protein>
    <recommendedName>
        <fullName>Omega-3 fatty acid desaturase fat-1</fullName>
        <shortName evidence="9 10">FAT-1</shortName>
        <ecNumber evidence="4 6 8">1.14.19.-</ecNumber>
    </recommendedName>
    <alternativeName>
        <fullName evidence="9">FAT-1 N3 desaturase</fullName>
    </alternativeName>
    <alternativeName>
        <fullName>Fatty acid desaturase 1</fullName>
    </alternativeName>
    <alternativeName>
        <fullName evidence="10">Fatty acid metabolism 1</fullName>
    </alternativeName>
</protein>
<evidence type="ECO:0000250" key="1">
    <source>
        <dbReference type="UniProtKB" id="G5EGA5"/>
    </source>
</evidence>
<evidence type="ECO:0000255" key="2"/>
<evidence type="ECO:0000269" key="3">
    <source>
    </source>
</evidence>
<evidence type="ECO:0000269" key="4">
    <source>
    </source>
</evidence>
<evidence type="ECO:0000269" key="5">
    <source>
    </source>
</evidence>
<evidence type="ECO:0000269" key="6">
    <source>
    </source>
</evidence>
<evidence type="ECO:0000269" key="7">
    <source>
    </source>
</evidence>
<evidence type="ECO:0000269" key="8">
    <source>
    </source>
</evidence>
<evidence type="ECO:0000303" key="9">
    <source>
    </source>
</evidence>
<evidence type="ECO:0000303" key="10">
    <source>
    </source>
</evidence>
<evidence type="ECO:0000305" key="11"/>
<evidence type="ECO:0000305" key="12">
    <source>
    </source>
</evidence>
<evidence type="ECO:0000305" key="13">
    <source>
    </source>
</evidence>
<evidence type="ECO:0000305" key="14">
    <source>
    </source>
</evidence>
<evidence type="ECO:0000305" key="15">
    <source>
    </source>
</evidence>
<evidence type="ECO:0000305" key="16">
    <source>
    </source>
</evidence>